<geneLocation type="chloroplast"/>
<proteinExistence type="inferred from homology"/>
<keyword id="KW-0150">Chloroplast</keyword>
<keyword id="KW-0934">Plastid</keyword>
<keyword id="KW-0687">Ribonucleoprotein</keyword>
<keyword id="KW-0689">Ribosomal protein</keyword>
<reference key="1">
    <citation type="journal article" date="2006" name="Mol. Biol. Evol.">
        <title>The complete chloroplast genome sequence of Pelargonium x hortorum: organization and evolution of the largest and most highly rearranged chloroplast genome of land plants.</title>
        <authorList>
            <person name="Chumley T.W."/>
            <person name="Palmer J.D."/>
            <person name="Mower J.P."/>
            <person name="Fourcade H.M."/>
            <person name="Calie P.J."/>
            <person name="Boore J.L."/>
            <person name="Jansen R.K."/>
        </authorList>
    </citation>
    <scope>NUCLEOTIDE SEQUENCE [LARGE SCALE GENOMIC DNA]</scope>
    <source>
        <strain>cv. Ringo White</strain>
    </source>
</reference>
<gene>
    <name evidence="1" type="primary">rpl16</name>
</gene>
<protein>
    <recommendedName>
        <fullName evidence="1">Large ribosomal subunit protein uL16c</fullName>
    </recommendedName>
    <alternativeName>
        <fullName evidence="3">50S ribosomal protein L16, chloroplastic</fullName>
    </alternativeName>
</protein>
<evidence type="ECO:0000255" key="1">
    <source>
        <dbReference type="HAMAP-Rule" id="MF_01342"/>
    </source>
</evidence>
<evidence type="ECO:0000256" key="2">
    <source>
        <dbReference type="SAM" id="MobiDB-lite"/>
    </source>
</evidence>
<evidence type="ECO:0000305" key="3"/>
<feature type="chain" id="PRO_0000276387" description="Large ribosomal subunit protein uL16c">
    <location>
        <begin position="1"/>
        <end position="135"/>
    </location>
</feature>
<feature type="region of interest" description="Disordered" evidence="2">
    <location>
        <begin position="1"/>
        <end position="24"/>
    </location>
</feature>
<feature type="compositionally biased region" description="Basic residues" evidence="2">
    <location>
        <begin position="1"/>
        <end position="23"/>
    </location>
</feature>
<accession>Q06FM7</accession>
<organism>
    <name type="scientific">Pelargonium hortorum</name>
    <name type="common">Common geranium</name>
    <name type="synonym">Pelargonium inquinans x Pelargonium zonale</name>
    <dbReference type="NCBI Taxonomy" id="4031"/>
    <lineage>
        <taxon>Eukaryota</taxon>
        <taxon>Viridiplantae</taxon>
        <taxon>Streptophyta</taxon>
        <taxon>Embryophyta</taxon>
        <taxon>Tracheophyta</taxon>
        <taxon>Spermatophyta</taxon>
        <taxon>Magnoliopsida</taxon>
        <taxon>eudicotyledons</taxon>
        <taxon>Gunneridae</taxon>
        <taxon>Pentapetalae</taxon>
        <taxon>rosids</taxon>
        <taxon>malvids</taxon>
        <taxon>Geraniales</taxon>
        <taxon>Geraniaceae</taxon>
        <taxon>Pelargonium</taxon>
    </lineage>
</organism>
<dbReference type="EMBL" id="DQ897681">
    <property type="protein sequence ID" value="ABI17346.1"/>
    <property type="molecule type" value="Genomic_DNA"/>
</dbReference>
<dbReference type="EMBL" id="DQ897681">
    <property type="protein sequence ID" value="ABI17294.1"/>
    <property type="molecule type" value="Genomic_DNA"/>
</dbReference>
<dbReference type="RefSeq" id="YP_784102.1">
    <property type="nucleotide sequence ID" value="NC_008454.1"/>
</dbReference>
<dbReference type="RefSeq" id="YP_784154.1">
    <property type="nucleotide sequence ID" value="NC_008454.1"/>
</dbReference>
<dbReference type="SMR" id="Q06FM7"/>
<dbReference type="GeneID" id="4362832"/>
<dbReference type="GeneID" id="4362860"/>
<dbReference type="GO" id="GO:0009507">
    <property type="term" value="C:chloroplast"/>
    <property type="evidence" value="ECO:0007669"/>
    <property type="project" value="UniProtKB-SubCell"/>
</dbReference>
<dbReference type="GO" id="GO:0005762">
    <property type="term" value="C:mitochondrial large ribosomal subunit"/>
    <property type="evidence" value="ECO:0007669"/>
    <property type="project" value="TreeGrafter"/>
</dbReference>
<dbReference type="GO" id="GO:0019843">
    <property type="term" value="F:rRNA binding"/>
    <property type="evidence" value="ECO:0007669"/>
    <property type="project" value="InterPro"/>
</dbReference>
<dbReference type="GO" id="GO:0003735">
    <property type="term" value="F:structural constituent of ribosome"/>
    <property type="evidence" value="ECO:0007669"/>
    <property type="project" value="InterPro"/>
</dbReference>
<dbReference type="GO" id="GO:0032543">
    <property type="term" value="P:mitochondrial translation"/>
    <property type="evidence" value="ECO:0007669"/>
    <property type="project" value="TreeGrafter"/>
</dbReference>
<dbReference type="CDD" id="cd01433">
    <property type="entry name" value="Ribosomal_L16_L10e"/>
    <property type="match status" value="1"/>
</dbReference>
<dbReference type="FunFam" id="3.90.1170.10:FF:000001">
    <property type="entry name" value="50S ribosomal protein L16"/>
    <property type="match status" value="1"/>
</dbReference>
<dbReference type="Gene3D" id="3.90.1170.10">
    <property type="entry name" value="Ribosomal protein L10e/L16"/>
    <property type="match status" value="1"/>
</dbReference>
<dbReference type="HAMAP" id="MF_01342">
    <property type="entry name" value="Ribosomal_uL16"/>
    <property type="match status" value="1"/>
</dbReference>
<dbReference type="InterPro" id="IPR047873">
    <property type="entry name" value="Ribosomal_uL16"/>
</dbReference>
<dbReference type="InterPro" id="IPR000114">
    <property type="entry name" value="Ribosomal_uL16_bact-type"/>
</dbReference>
<dbReference type="InterPro" id="IPR020798">
    <property type="entry name" value="Ribosomal_uL16_CS"/>
</dbReference>
<dbReference type="InterPro" id="IPR016180">
    <property type="entry name" value="Ribosomal_uL16_dom"/>
</dbReference>
<dbReference type="InterPro" id="IPR036920">
    <property type="entry name" value="Ribosomal_uL16_sf"/>
</dbReference>
<dbReference type="NCBIfam" id="TIGR01164">
    <property type="entry name" value="rplP_bact"/>
    <property type="match status" value="1"/>
</dbReference>
<dbReference type="PANTHER" id="PTHR12220">
    <property type="entry name" value="50S/60S RIBOSOMAL PROTEIN L16"/>
    <property type="match status" value="1"/>
</dbReference>
<dbReference type="PANTHER" id="PTHR12220:SF13">
    <property type="entry name" value="LARGE RIBOSOMAL SUBUNIT PROTEIN UL16M"/>
    <property type="match status" value="1"/>
</dbReference>
<dbReference type="Pfam" id="PF00252">
    <property type="entry name" value="Ribosomal_L16"/>
    <property type="match status" value="1"/>
</dbReference>
<dbReference type="PRINTS" id="PR00060">
    <property type="entry name" value="RIBOSOMALL16"/>
</dbReference>
<dbReference type="SUPFAM" id="SSF54686">
    <property type="entry name" value="Ribosomal protein L16p/L10e"/>
    <property type="match status" value="1"/>
</dbReference>
<dbReference type="PROSITE" id="PS00586">
    <property type="entry name" value="RIBOSOMAL_L16_1"/>
    <property type="match status" value="1"/>
</dbReference>
<dbReference type="PROSITE" id="PS00701">
    <property type="entry name" value="RIBOSOMAL_L16_2"/>
    <property type="match status" value="1"/>
</dbReference>
<name>RK16_PELHO</name>
<sequence>MLSPKKTKFRKEHRGRMKGRSSRGSRISFGKYALQALEPAWLTSRQIEAGRRAMTRNVRRGGKIWVRIFPDKPVTVKPTQTRMGSGKGSPEYWVAVVKPGRILYEMGGVAENIARKAIEIAASKMPIRTQFIISK</sequence>
<comment type="subunit">
    <text evidence="1">Part of the 50S ribosomal subunit.</text>
</comment>
<comment type="subcellular location">
    <subcellularLocation>
        <location>Plastid</location>
        <location>Chloroplast</location>
    </subcellularLocation>
</comment>
<comment type="similarity">
    <text evidence="1">Belongs to the universal ribosomal protein uL16 family.</text>
</comment>